<name>PNP_STREM</name>
<reference key="1">
    <citation type="journal article" date="2008" name="PLoS ONE">
        <title>Genome sequence of a lancefield group C Streptococcus zooepidemicus strain causing epidemic nephritis: new information about an old disease.</title>
        <authorList>
            <person name="Beres S.B."/>
            <person name="Sesso R."/>
            <person name="Pinto S.W.L."/>
            <person name="Hoe N.P."/>
            <person name="Porcella S.F."/>
            <person name="Deleo F.R."/>
            <person name="Musser J.M."/>
        </authorList>
    </citation>
    <scope>NUCLEOTIDE SEQUENCE [LARGE SCALE GENOMIC DNA]</scope>
    <source>
        <strain>MGCS10565</strain>
    </source>
</reference>
<proteinExistence type="inferred from homology"/>
<accession>B4U573</accession>
<protein>
    <recommendedName>
        <fullName evidence="1">Polyribonucleotide nucleotidyltransferase</fullName>
        <ecNumber evidence="1">2.7.7.8</ecNumber>
    </recommendedName>
    <alternativeName>
        <fullName evidence="1">Polynucleotide phosphorylase</fullName>
        <shortName evidence="1">PNPase</shortName>
    </alternativeName>
</protein>
<feature type="chain" id="PRO_1000192495" description="Polyribonucleotide nucleotidyltransferase">
    <location>
        <begin position="1"/>
        <end position="714"/>
    </location>
</feature>
<feature type="domain" description="KH" evidence="1">
    <location>
        <begin position="556"/>
        <end position="615"/>
    </location>
</feature>
<feature type="domain" description="S1 motif" evidence="1">
    <location>
        <begin position="625"/>
        <end position="693"/>
    </location>
</feature>
<feature type="region of interest" description="Disordered" evidence="2">
    <location>
        <begin position="691"/>
        <end position="714"/>
    </location>
</feature>
<feature type="compositionally biased region" description="Basic and acidic residues" evidence="2">
    <location>
        <begin position="700"/>
        <end position="714"/>
    </location>
</feature>
<feature type="binding site" evidence="1">
    <location>
        <position position="489"/>
    </location>
    <ligand>
        <name>Mg(2+)</name>
        <dbReference type="ChEBI" id="CHEBI:18420"/>
    </ligand>
</feature>
<feature type="binding site" evidence="1">
    <location>
        <position position="495"/>
    </location>
    <ligand>
        <name>Mg(2+)</name>
        <dbReference type="ChEBI" id="CHEBI:18420"/>
    </ligand>
</feature>
<comment type="function">
    <text evidence="1">Involved in mRNA degradation. Catalyzes the phosphorolysis of single-stranded polyribonucleotides processively in the 3'- to 5'-direction.</text>
</comment>
<comment type="catalytic activity">
    <reaction evidence="1">
        <text>RNA(n+1) + phosphate = RNA(n) + a ribonucleoside 5'-diphosphate</text>
        <dbReference type="Rhea" id="RHEA:22096"/>
        <dbReference type="Rhea" id="RHEA-COMP:14527"/>
        <dbReference type="Rhea" id="RHEA-COMP:17342"/>
        <dbReference type="ChEBI" id="CHEBI:43474"/>
        <dbReference type="ChEBI" id="CHEBI:57930"/>
        <dbReference type="ChEBI" id="CHEBI:140395"/>
        <dbReference type="EC" id="2.7.7.8"/>
    </reaction>
</comment>
<comment type="cofactor">
    <cofactor evidence="1">
        <name>Mg(2+)</name>
        <dbReference type="ChEBI" id="CHEBI:18420"/>
    </cofactor>
</comment>
<comment type="subcellular location">
    <subcellularLocation>
        <location evidence="1">Cytoplasm</location>
    </subcellularLocation>
</comment>
<comment type="similarity">
    <text evidence="1">Belongs to the polyribonucleotide nucleotidyltransferase family.</text>
</comment>
<dbReference type="EC" id="2.7.7.8" evidence="1"/>
<dbReference type="EMBL" id="CP001129">
    <property type="protein sequence ID" value="ACG63084.1"/>
    <property type="molecule type" value="Genomic_DNA"/>
</dbReference>
<dbReference type="RefSeq" id="WP_012516335.1">
    <property type="nucleotide sequence ID" value="NC_011134.1"/>
</dbReference>
<dbReference type="SMR" id="B4U573"/>
<dbReference type="KEGG" id="sez:Sez_1757"/>
<dbReference type="HOGENOM" id="CLU_004217_2_2_9"/>
<dbReference type="Proteomes" id="UP000001873">
    <property type="component" value="Chromosome"/>
</dbReference>
<dbReference type="GO" id="GO:0005829">
    <property type="term" value="C:cytosol"/>
    <property type="evidence" value="ECO:0007669"/>
    <property type="project" value="TreeGrafter"/>
</dbReference>
<dbReference type="GO" id="GO:0000175">
    <property type="term" value="F:3'-5'-RNA exonuclease activity"/>
    <property type="evidence" value="ECO:0007669"/>
    <property type="project" value="TreeGrafter"/>
</dbReference>
<dbReference type="GO" id="GO:0000287">
    <property type="term" value="F:magnesium ion binding"/>
    <property type="evidence" value="ECO:0007669"/>
    <property type="project" value="UniProtKB-UniRule"/>
</dbReference>
<dbReference type="GO" id="GO:0004654">
    <property type="term" value="F:polyribonucleotide nucleotidyltransferase activity"/>
    <property type="evidence" value="ECO:0007669"/>
    <property type="project" value="UniProtKB-UniRule"/>
</dbReference>
<dbReference type="GO" id="GO:0003723">
    <property type="term" value="F:RNA binding"/>
    <property type="evidence" value="ECO:0007669"/>
    <property type="project" value="UniProtKB-UniRule"/>
</dbReference>
<dbReference type="GO" id="GO:0006402">
    <property type="term" value="P:mRNA catabolic process"/>
    <property type="evidence" value="ECO:0007669"/>
    <property type="project" value="UniProtKB-UniRule"/>
</dbReference>
<dbReference type="GO" id="GO:0006396">
    <property type="term" value="P:RNA processing"/>
    <property type="evidence" value="ECO:0007669"/>
    <property type="project" value="InterPro"/>
</dbReference>
<dbReference type="CDD" id="cd02393">
    <property type="entry name" value="KH-I_PNPase"/>
    <property type="match status" value="1"/>
</dbReference>
<dbReference type="CDD" id="cd11363">
    <property type="entry name" value="RNase_PH_PNPase_1"/>
    <property type="match status" value="1"/>
</dbReference>
<dbReference type="CDD" id="cd11364">
    <property type="entry name" value="RNase_PH_PNPase_2"/>
    <property type="match status" value="1"/>
</dbReference>
<dbReference type="FunFam" id="2.40.50.140:FF:000023">
    <property type="entry name" value="Polyribonucleotide nucleotidyltransferase"/>
    <property type="match status" value="1"/>
</dbReference>
<dbReference type="FunFam" id="3.30.1370.10:FF:000001">
    <property type="entry name" value="Polyribonucleotide nucleotidyltransferase"/>
    <property type="match status" value="1"/>
</dbReference>
<dbReference type="FunFam" id="3.30.230.70:FF:000001">
    <property type="entry name" value="Polyribonucleotide nucleotidyltransferase"/>
    <property type="match status" value="1"/>
</dbReference>
<dbReference type="FunFam" id="3.30.230.70:FF:000002">
    <property type="entry name" value="Polyribonucleotide nucleotidyltransferase"/>
    <property type="match status" value="1"/>
</dbReference>
<dbReference type="Gene3D" id="3.30.230.70">
    <property type="entry name" value="GHMP Kinase, N-terminal domain"/>
    <property type="match status" value="2"/>
</dbReference>
<dbReference type="Gene3D" id="3.30.1370.10">
    <property type="entry name" value="K Homology domain, type 1"/>
    <property type="match status" value="1"/>
</dbReference>
<dbReference type="Gene3D" id="2.40.50.140">
    <property type="entry name" value="Nucleic acid-binding proteins"/>
    <property type="match status" value="1"/>
</dbReference>
<dbReference type="HAMAP" id="MF_01595">
    <property type="entry name" value="PNPase"/>
    <property type="match status" value="1"/>
</dbReference>
<dbReference type="InterPro" id="IPR001247">
    <property type="entry name" value="ExoRNase_PH_dom1"/>
</dbReference>
<dbReference type="InterPro" id="IPR015847">
    <property type="entry name" value="ExoRNase_PH_dom2"/>
</dbReference>
<dbReference type="InterPro" id="IPR036345">
    <property type="entry name" value="ExoRNase_PH_dom2_sf"/>
</dbReference>
<dbReference type="InterPro" id="IPR004087">
    <property type="entry name" value="KH_dom"/>
</dbReference>
<dbReference type="InterPro" id="IPR004088">
    <property type="entry name" value="KH_dom_type_1"/>
</dbReference>
<dbReference type="InterPro" id="IPR036612">
    <property type="entry name" value="KH_dom_type_1_sf"/>
</dbReference>
<dbReference type="InterPro" id="IPR012340">
    <property type="entry name" value="NA-bd_OB-fold"/>
</dbReference>
<dbReference type="InterPro" id="IPR012162">
    <property type="entry name" value="PNPase"/>
</dbReference>
<dbReference type="InterPro" id="IPR027408">
    <property type="entry name" value="PNPase/RNase_PH_dom_sf"/>
</dbReference>
<dbReference type="InterPro" id="IPR015848">
    <property type="entry name" value="PNPase_PH_RNA-bd_bac/org-type"/>
</dbReference>
<dbReference type="InterPro" id="IPR036456">
    <property type="entry name" value="PNPase_PH_RNA-bd_sf"/>
</dbReference>
<dbReference type="InterPro" id="IPR020568">
    <property type="entry name" value="Ribosomal_Su5_D2-typ_SF"/>
</dbReference>
<dbReference type="InterPro" id="IPR003029">
    <property type="entry name" value="S1_domain"/>
</dbReference>
<dbReference type="NCBIfam" id="TIGR03591">
    <property type="entry name" value="polynuc_phos"/>
    <property type="match status" value="1"/>
</dbReference>
<dbReference type="NCBIfam" id="NF008805">
    <property type="entry name" value="PRK11824.1"/>
    <property type="match status" value="1"/>
</dbReference>
<dbReference type="PANTHER" id="PTHR11252">
    <property type="entry name" value="POLYRIBONUCLEOTIDE NUCLEOTIDYLTRANSFERASE"/>
    <property type="match status" value="1"/>
</dbReference>
<dbReference type="PANTHER" id="PTHR11252:SF0">
    <property type="entry name" value="POLYRIBONUCLEOTIDE NUCLEOTIDYLTRANSFERASE 1, MITOCHONDRIAL"/>
    <property type="match status" value="1"/>
</dbReference>
<dbReference type="Pfam" id="PF00013">
    <property type="entry name" value="KH_1"/>
    <property type="match status" value="1"/>
</dbReference>
<dbReference type="Pfam" id="PF03726">
    <property type="entry name" value="PNPase"/>
    <property type="match status" value="1"/>
</dbReference>
<dbReference type="Pfam" id="PF01138">
    <property type="entry name" value="RNase_PH"/>
    <property type="match status" value="2"/>
</dbReference>
<dbReference type="Pfam" id="PF03725">
    <property type="entry name" value="RNase_PH_C"/>
    <property type="match status" value="2"/>
</dbReference>
<dbReference type="Pfam" id="PF00575">
    <property type="entry name" value="S1"/>
    <property type="match status" value="1"/>
</dbReference>
<dbReference type="PIRSF" id="PIRSF005499">
    <property type="entry name" value="PNPase"/>
    <property type="match status" value="1"/>
</dbReference>
<dbReference type="SMART" id="SM00322">
    <property type="entry name" value="KH"/>
    <property type="match status" value="1"/>
</dbReference>
<dbReference type="SMART" id="SM00316">
    <property type="entry name" value="S1"/>
    <property type="match status" value="1"/>
</dbReference>
<dbReference type="SUPFAM" id="SSF54791">
    <property type="entry name" value="Eukaryotic type KH-domain (KH-domain type I)"/>
    <property type="match status" value="1"/>
</dbReference>
<dbReference type="SUPFAM" id="SSF50249">
    <property type="entry name" value="Nucleic acid-binding proteins"/>
    <property type="match status" value="1"/>
</dbReference>
<dbReference type="SUPFAM" id="SSF46915">
    <property type="entry name" value="Polynucleotide phosphorylase/guanosine pentaphosphate synthase (PNPase/GPSI), domain 3"/>
    <property type="match status" value="1"/>
</dbReference>
<dbReference type="SUPFAM" id="SSF55666">
    <property type="entry name" value="Ribonuclease PH domain 2-like"/>
    <property type="match status" value="2"/>
</dbReference>
<dbReference type="SUPFAM" id="SSF54211">
    <property type="entry name" value="Ribosomal protein S5 domain 2-like"/>
    <property type="match status" value="2"/>
</dbReference>
<dbReference type="PROSITE" id="PS50084">
    <property type="entry name" value="KH_TYPE_1"/>
    <property type="match status" value="1"/>
</dbReference>
<dbReference type="PROSITE" id="PS50126">
    <property type="entry name" value="S1"/>
    <property type="match status" value="1"/>
</dbReference>
<gene>
    <name evidence="1" type="primary">pnp</name>
    <name type="ordered locus">Sez_1757</name>
</gene>
<organism>
    <name type="scientific">Streptococcus equi subsp. zooepidemicus (strain MGCS10565)</name>
    <dbReference type="NCBI Taxonomy" id="552526"/>
    <lineage>
        <taxon>Bacteria</taxon>
        <taxon>Bacillati</taxon>
        <taxon>Bacillota</taxon>
        <taxon>Bacilli</taxon>
        <taxon>Lactobacillales</taxon>
        <taxon>Streptococcaceae</taxon>
        <taxon>Streptococcus</taxon>
    </lineage>
</organism>
<keyword id="KW-0963">Cytoplasm</keyword>
<keyword id="KW-0460">Magnesium</keyword>
<keyword id="KW-0479">Metal-binding</keyword>
<keyword id="KW-0548">Nucleotidyltransferase</keyword>
<keyword id="KW-0694">RNA-binding</keyword>
<keyword id="KW-0808">Transferase</keyword>
<sequence length="714" mass="77748">MSKQTFTTTFAGKPLVVEVGQVAKQANGATVVRYGESTVLTAAVMSKKMSTGDFFPLQVNYEEKMYAAGKFPGGWMKREGRPSTDATLTARLIDRPIRPMFAEGFRNEVQVINTVLSYDEDASAPMAAMLGSSLALSISDIPFNGPIAGVQVAYVEGEFIINPDKAQQEASLLELTVAGTKDAINMVESGAKELPEAIMLEALLVGHKAIQELIAFQEEIVAAVGKEKAEVELLQVAADLQAEIIETYNADLQQAVQVEEKKAREAATEAVKERVIAAYEERYAADEEHDRIMRDVTEILEQMEHAEVRRLITEDKVRPDGRRVDEIRPLAAEIDFLPMVHGSGLFTRGQTQALSVLTLAPMGDTQIIDGLEPEYKKRFLHHYNFPQYSVGETGRYGAAGRREIGHGALGERALAQVLPSLEEFPYAIRLVAEVLESNGSSSQASICAGTLALMAGGVPIKAPVAGIAMGLISDGTNYTVLTDIQGLEDHFGDMDFKVAGTRQGITALQMDIKIEGITPQILEEALAQAKKARFEILDLIEATIAEPRPELAPTAPKIDTIKIDVDKIKVVIGKGGETIDKIIAETGVKIDIDEEGNVSIYSSDQDAINRAKEIIASLVREAKVGEVYHAKVVRIEKFGAFVNLFDKTDALVHISEIAWSRTANVSDVLEIGEEVDVKVIKVDDKGRIDASMKALVPRPPKPEKSEAKKEGKHD</sequence>
<evidence type="ECO:0000255" key="1">
    <source>
        <dbReference type="HAMAP-Rule" id="MF_01595"/>
    </source>
</evidence>
<evidence type="ECO:0000256" key="2">
    <source>
        <dbReference type="SAM" id="MobiDB-lite"/>
    </source>
</evidence>